<evidence type="ECO:0000255" key="1">
    <source>
        <dbReference type="HAMAP-Rule" id="MF_00066"/>
    </source>
</evidence>
<gene>
    <name evidence="1" type="primary">sat</name>
    <name type="ordered locus">PERMA_1983</name>
</gene>
<name>SAT_PERMH</name>
<dbReference type="EC" id="2.7.7.4" evidence="1"/>
<dbReference type="EMBL" id="CP001230">
    <property type="protein sequence ID" value="ACO03816.1"/>
    <property type="molecule type" value="Genomic_DNA"/>
</dbReference>
<dbReference type="RefSeq" id="WP_012676055.1">
    <property type="nucleotide sequence ID" value="NC_012440.1"/>
</dbReference>
<dbReference type="SMR" id="C0QSU0"/>
<dbReference type="STRING" id="123214.PERMA_1983"/>
<dbReference type="PaxDb" id="123214-PERMA_1983"/>
<dbReference type="KEGG" id="pmx:PERMA_1983"/>
<dbReference type="eggNOG" id="COG2046">
    <property type="taxonomic scope" value="Bacteria"/>
</dbReference>
<dbReference type="HOGENOM" id="CLU_022950_1_1_0"/>
<dbReference type="OrthoDB" id="9804504at2"/>
<dbReference type="UniPathway" id="UPA00140">
    <property type="reaction ID" value="UER00204"/>
</dbReference>
<dbReference type="Proteomes" id="UP000001366">
    <property type="component" value="Chromosome"/>
</dbReference>
<dbReference type="GO" id="GO:0005524">
    <property type="term" value="F:ATP binding"/>
    <property type="evidence" value="ECO:0007669"/>
    <property type="project" value="UniProtKB-KW"/>
</dbReference>
<dbReference type="GO" id="GO:0004781">
    <property type="term" value="F:sulfate adenylyltransferase (ATP) activity"/>
    <property type="evidence" value="ECO:0007669"/>
    <property type="project" value="UniProtKB-UniRule"/>
</dbReference>
<dbReference type="GO" id="GO:0070814">
    <property type="term" value="P:hydrogen sulfide biosynthetic process"/>
    <property type="evidence" value="ECO:0007669"/>
    <property type="project" value="UniProtKB-UniRule"/>
</dbReference>
<dbReference type="GO" id="GO:0000103">
    <property type="term" value="P:sulfate assimilation"/>
    <property type="evidence" value="ECO:0007669"/>
    <property type="project" value="UniProtKB-UniRule"/>
</dbReference>
<dbReference type="CDD" id="cd00517">
    <property type="entry name" value="ATPS"/>
    <property type="match status" value="1"/>
</dbReference>
<dbReference type="Gene3D" id="3.40.50.620">
    <property type="entry name" value="HUPs"/>
    <property type="match status" value="1"/>
</dbReference>
<dbReference type="Gene3D" id="3.10.400.10">
    <property type="entry name" value="Sulfate adenylyltransferase"/>
    <property type="match status" value="1"/>
</dbReference>
<dbReference type="HAMAP" id="MF_00066">
    <property type="entry name" value="Sulf_adenylyltr"/>
    <property type="match status" value="1"/>
</dbReference>
<dbReference type="InterPro" id="IPR025980">
    <property type="entry name" value="ATP-Sase_PUA-like_dom"/>
</dbReference>
<dbReference type="InterPro" id="IPR015947">
    <property type="entry name" value="PUA-like_sf"/>
</dbReference>
<dbReference type="InterPro" id="IPR014729">
    <property type="entry name" value="Rossmann-like_a/b/a_fold"/>
</dbReference>
<dbReference type="InterPro" id="IPR020792">
    <property type="entry name" value="SO4_adenylyltransferase_pro"/>
</dbReference>
<dbReference type="InterPro" id="IPR024951">
    <property type="entry name" value="Sulfurylase_cat_dom"/>
</dbReference>
<dbReference type="InterPro" id="IPR002650">
    <property type="entry name" value="Sulphate_adenylyltransferase"/>
</dbReference>
<dbReference type="NCBIfam" id="NF003166">
    <property type="entry name" value="PRK04149.1"/>
    <property type="match status" value="1"/>
</dbReference>
<dbReference type="NCBIfam" id="TIGR00339">
    <property type="entry name" value="sopT"/>
    <property type="match status" value="1"/>
</dbReference>
<dbReference type="PANTHER" id="PTHR43509">
    <property type="match status" value="1"/>
</dbReference>
<dbReference type="PANTHER" id="PTHR43509:SF1">
    <property type="entry name" value="SULFATE ADENYLYLTRANSFERASE"/>
    <property type="match status" value="1"/>
</dbReference>
<dbReference type="Pfam" id="PF01747">
    <property type="entry name" value="ATP-sulfurylase"/>
    <property type="match status" value="1"/>
</dbReference>
<dbReference type="Pfam" id="PF14306">
    <property type="entry name" value="PUA_2"/>
    <property type="match status" value="1"/>
</dbReference>
<dbReference type="SUPFAM" id="SSF52374">
    <property type="entry name" value="Nucleotidylyl transferase"/>
    <property type="match status" value="1"/>
</dbReference>
<dbReference type="SUPFAM" id="SSF88697">
    <property type="entry name" value="PUA domain-like"/>
    <property type="match status" value="1"/>
</dbReference>
<proteinExistence type="inferred from homology"/>
<keyword id="KW-0067">ATP-binding</keyword>
<keyword id="KW-0547">Nucleotide-binding</keyword>
<keyword id="KW-0548">Nucleotidyltransferase</keyword>
<keyword id="KW-1185">Reference proteome</keyword>
<keyword id="KW-0808">Transferase</keyword>
<accession>C0QSU0</accession>
<reference key="1">
    <citation type="journal article" date="2009" name="J. Bacteriol.">
        <title>Complete and draft genome sequences of six members of the Aquificales.</title>
        <authorList>
            <person name="Reysenbach A.-L."/>
            <person name="Hamamura N."/>
            <person name="Podar M."/>
            <person name="Griffiths E."/>
            <person name="Ferreira S."/>
            <person name="Hochstein R."/>
            <person name="Heidelberg J."/>
            <person name="Johnson J."/>
            <person name="Mead D."/>
            <person name="Pohorille A."/>
            <person name="Sarmiento M."/>
            <person name="Schweighofer K."/>
            <person name="Seshadri R."/>
            <person name="Voytek M.A."/>
        </authorList>
    </citation>
    <scope>NUCLEOTIDE SEQUENCE [LARGE SCALE GENOMIC DNA]</scope>
    <source>
        <strain>DSM 14350 / EX-H1</strain>
    </source>
</reference>
<sequence>MLNPHGGKLINKIATEEERKDLTEKAKTLKKIVIADRYVSDCEMIANGGFSPLDGFMTKEDAESVINDIQLKNGLLWAIPIVLPVGEDVFNQIKIGDEVALYDRHNRPIAIMVVEDKYTLDLENYCKNVFKTTDIEHPGVKVVKSAGNKFIGGEIIRLLNRPVREGIDEKYYLDPAQVRENIKNKGWKKIVAFQTRNPIHRAHEYIIKVALEPMDGVMIHPLVGETKPDDIPADVRMKCYEVLIDNYFNREKVHLSVLPASMHYAGPREAIHHMLMRKNYGATHMIIGRDHAGVGDYYGTYEAQEFVEQFVDQLEIQPLKFEHSFYCTKCENMASFKTCPHPKEDHIHLSGTKVRAMLREGKRPPKEFSRPEVADILIKWATGKNG</sequence>
<comment type="catalytic activity">
    <reaction evidence="1">
        <text>sulfate + ATP + H(+) = adenosine 5'-phosphosulfate + diphosphate</text>
        <dbReference type="Rhea" id="RHEA:18133"/>
        <dbReference type="ChEBI" id="CHEBI:15378"/>
        <dbReference type="ChEBI" id="CHEBI:16189"/>
        <dbReference type="ChEBI" id="CHEBI:30616"/>
        <dbReference type="ChEBI" id="CHEBI:33019"/>
        <dbReference type="ChEBI" id="CHEBI:58243"/>
        <dbReference type="EC" id="2.7.7.4"/>
    </reaction>
</comment>
<comment type="pathway">
    <text evidence="1">Sulfur metabolism; hydrogen sulfide biosynthesis; sulfite from sulfate: step 1/3.</text>
</comment>
<comment type="similarity">
    <text evidence="1">Belongs to the sulfate adenylyltransferase family.</text>
</comment>
<protein>
    <recommendedName>
        <fullName evidence="1">Sulfate adenylyltransferase</fullName>
        <ecNumber evidence="1">2.7.7.4</ecNumber>
    </recommendedName>
    <alternativeName>
        <fullName evidence="1">ATP-sulfurylase</fullName>
    </alternativeName>
    <alternativeName>
        <fullName evidence="1">Sulfate adenylate transferase</fullName>
        <shortName evidence="1">SAT</shortName>
    </alternativeName>
</protein>
<organism>
    <name type="scientific">Persephonella marina (strain DSM 14350 / EX-H1)</name>
    <dbReference type="NCBI Taxonomy" id="123214"/>
    <lineage>
        <taxon>Bacteria</taxon>
        <taxon>Pseudomonadati</taxon>
        <taxon>Aquificota</taxon>
        <taxon>Aquificia</taxon>
        <taxon>Aquificales</taxon>
        <taxon>Hydrogenothermaceae</taxon>
        <taxon>Persephonella</taxon>
    </lineage>
</organism>
<feature type="chain" id="PRO_1000117968" description="Sulfate adenylyltransferase">
    <location>
        <begin position="1"/>
        <end position="386"/>
    </location>
</feature>